<proteinExistence type="inferred from homology"/>
<name>ATP25_TALSN</name>
<accession>B8MPW2</accession>
<comment type="function">
    <text evidence="1">Probable mitochondrial mRNA stabilization factor.</text>
</comment>
<comment type="subcellular location">
    <subcellularLocation>
        <location evidence="1">Mitochondrion inner membrane</location>
        <topology evidence="1">Peripheral membrane protein</topology>
        <orientation evidence="1">Matrix side</orientation>
    </subcellularLocation>
</comment>
<comment type="similarity">
    <text evidence="4">Belongs to the ATP25 family.</text>
</comment>
<keyword id="KW-0472">Membrane</keyword>
<keyword id="KW-0496">Mitochondrion</keyword>
<keyword id="KW-0999">Mitochondrion inner membrane</keyword>
<keyword id="KW-1185">Reference proteome</keyword>
<keyword id="KW-0809">Transit peptide</keyword>
<feature type="transit peptide" description="Mitochondrion" evidence="2">
    <location>
        <begin position="1"/>
        <end position="60"/>
    </location>
</feature>
<feature type="chain" id="PRO_0000404487" description="ATPase synthesis protein 25, mitochondrial">
    <location>
        <begin position="61"/>
        <end position="680"/>
    </location>
</feature>
<feature type="region of interest" description="Disordered" evidence="3">
    <location>
        <begin position="286"/>
        <end position="326"/>
    </location>
</feature>
<feature type="region of interest" description="Disordered" evidence="3">
    <location>
        <begin position="338"/>
        <end position="374"/>
    </location>
</feature>
<feature type="region of interest" description="Disordered" evidence="3">
    <location>
        <begin position="384"/>
        <end position="403"/>
    </location>
</feature>
<feature type="compositionally biased region" description="Basic and acidic residues" evidence="3">
    <location>
        <begin position="286"/>
        <end position="296"/>
    </location>
</feature>
<feature type="compositionally biased region" description="Polar residues" evidence="3">
    <location>
        <begin position="311"/>
        <end position="322"/>
    </location>
</feature>
<dbReference type="EMBL" id="EQ962659">
    <property type="protein sequence ID" value="EED12852.1"/>
    <property type="molecule type" value="Genomic_DNA"/>
</dbReference>
<dbReference type="RefSeq" id="XP_002486963.1">
    <property type="nucleotide sequence ID" value="XM_002486918.1"/>
</dbReference>
<dbReference type="SMR" id="B8MPW2"/>
<dbReference type="STRING" id="441959.B8MPW2"/>
<dbReference type="GeneID" id="8098317"/>
<dbReference type="VEuPathDB" id="FungiDB:TSTA_053660"/>
<dbReference type="eggNOG" id="ENOG502S5IB">
    <property type="taxonomic scope" value="Eukaryota"/>
</dbReference>
<dbReference type="HOGENOM" id="CLU_016140_0_0_1"/>
<dbReference type="InParanoid" id="B8MPW2"/>
<dbReference type="OMA" id="CLSSWVP"/>
<dbReference type="OrthoDB" id="107372at2759"/>
<dbReference type="PhylomeDB" id="B8MPW2"/>
<dbReference type="Proteomes" id="UP000001745">
    <property type="component" value="Unassembled WGS sequence"/>
</dbReference>
<dbReference type="GO" id="GO:0005743">
    <property type="term" value="C:mitochondrial inner membrane"/>
    <property type="evidence" value="ECO:0007669"/>
    <property type="project" value="UniProtKB-SubCell"/>
</dbReference>
<dbReference type="GO" id="GO:0140053">
    <property type="term" value="P:mitochondrial gene expression"/>
    <property type="evidence" value="ECO:0007669"/>
    <property type="project" value="InterPro"/>
</dbReference>
<dbReference type="GO" id="GO:0048255">
    <property type="term" value="P:mRNA stabilization"/>
    <property type="evidence" value="ECO:0007669"/>
    <property type="project" value="TreeGrafter"/>
</dbReference>
<dbReference type="FunFam" id="3.30.460.10:FF:000044">
    <property type="entry name" value="ATPase synthesis protein 25, mitochondrial"/>
    <property type="match status" value="1"/>
</dbReference>
<dbReference type="Gene3D" id="3.30.460.10">
    <property type="entry name" value="Beta Polymerase, domain 2"/>
    <property type="match status" value="1"/>
</dbReference>
<dbReference type="InterPro" id="IPR040152">
    <property type="entry name" value="Atp25"/>
</dbReference>
<dbReference type="InterPro" id="IPR043519">
    <property type="entry name" value="NT_sf"/>
</dbReference>
<dbReference type="PANTHER" id="PTHR28087">
    <property type="entry name" value="ATPASE SYNTHESIS PROTEIN 25, MITOCHONDRIAL"/>
    <property type="match status" value="1"/>
</dbReference>
<dbReference type="PANTHER" id="PTHR28087:SF1">
    <property type="entry name" value="ATPASE SYNTHESIS PROTEIN 25, MITOCHONDRIAL"/>
    <property type="match status" value="1"/>
</dbReference>
<organism>
    <name type="scientific">Talaromyces stipitatus (strain ATCC 10500 / CBS 375.48 / QM 6759 / NRRL 1006)</name>
    <name type="common">Penicillium stipitatum</name>
    <dbReference type="NCBI Taxonomy" id="441959"/>
    <lineage>
        <taxon>Eukaryota</taxon>
        <taxon>Fungi</taxon>
        <taxon>Dikarya</taxon>
        <taxon>Ascomycota</taxon>
        <taxon>Pezizomycotina</taxon>
        <taxon>Eurotiomycetes</taxon>
        <taxon>Eurotiomycetidae</taxon>
        <taxon>Eurotiales</taxon>
        <taxon>Trichocomaceae</taxon>
        <taxon>Talaromyces</taxon>
        <taxon>Talaromyces sect. Talaromyces</taxon>
    </lineage>
</organism>
<protein>
    <recommendedName>
        <fullName>ATPase synthesis protein 25, mitochondrial</fullName>
    </recommendedName>
</protein>
<gene>
    <name type="primary">atp25</name>
    <name type="ORF">TSTA_053660</name>
</gene>
<evidence type="ECO:0000250" key="1"/>
<evidence type="ECO:0000255" key="2"/>
<evidence type="ECO:0000256" key="3">
    <source>
        <dbReference type="SAM" id="MobiDB-lite"/>
    </source>
</evidence>
<evidence type="ECO:0000305" key="4"/>
<sequence length="680" mass="76017">MAAAALIRSTRCNTCRRYLLQSFTRVVGLTAQNSRLPNEPQRRQFFTTPYLNIKSSHRHLSDRDASAASNNEYFITNESANSSQAVPWYLQVEPVIEPTHPAVRQQEIPAVPANAPPITQEILQHLSLEIGLDDMVLLDLRGRDPPPALGGNVIMVIGTARSLKHLNVSADRFCRWLRSTYKLRPYADGLLGRNELKIKLRRKARRARLASSSGTISDTSDDGITTGWICVNVGSVDDPSVVQNMREGGFEGFGKVQGGTRIVVQMFTEDKRADVDLEQLWAPKDNVKAGDSEENHSYSTGGDYQVRSMPPITSENNSNHPISNVPRPLRRVDLSQRRSFSTGAGQHSARTDVDPESGYEVVDAKNESSRQEPPLSAIFSTLKEMSPEETIEQLGSGPEDKNSTEFLRDCYSSVGTSHNGNSALRLMLGAAGVSAQHPGYTKEYLWTLFLEQTASGYRISEPLGFEIASAFLVPRRLDAKEQGRTASEFVDFDIESAMRVMDNLSLNGETIIRKHRVYNMMYEALILGLRNERLDDVRLKALRIRTLMTEIGLDWQSEDTRETMQLRLLLGDVDGFYEIWHAIAFNEGSRTADDYELLFRVHAEAGNPVYARECLGVWISMMGREDPPVLPSASIISAIARCAHVAGHDADTFRLLSASDEWREVERLILSDLRTLEQLT</sequence>
<reference key="1">
    <citation type="journal article" date="2015" name="Genome Announc.">
        <title>Genome sequence of the AIDS-associated pathogen Penicillium marneffei (ATCC18224) and its near taxonomic relative Talaromyces stipitatus (ATCC10500).</title>
        <authorList>
            <person name="Nierman W.C."/>
            <person name="Fedorova-Abrams N.D."/>
            <person name="Andrianopoulos A."/>
        </authorList>
    </citation>
    <scope>NUCLEOTIDE SEQUENCE [LARGE SCALE GENOMIC DNA]</scope>
    <source>
        <strain>ATCC 10500 / CBS 375.48 / QM 6759 / NRRL 1006</strain>
    </source>
</reference>